<sequence length="837" mass="96767">MKDFVLLNDKILPNDVKCYSCCTTMDLIALVTKDDQIVIHRFLTWQKLFTINHMSTTINDNNTNNNNNNNNNNNNNNNDNNNDNDKSNKSIVSIQWSPNGKMISIGCEDGSIFIYNIENAKLINKSHNHKHPIHKLAWIKEVSQQRSQQQQQQQQQQQQQQQQQQQQQQQQQQQQQQQQQQQQQQNKNGSTKCNNNYVSPPLFLSQIKQNMNLFPSISYYFENSKEENIYLGGDIYDRPFDILICCDSIGVISLLAFGLFKIVTIDLLSLLKQKYSNTHFLIKPSKSLKILDITLTESLNKLSVMIETDNGLFLSVTIDTSILLEKRNEIHEISLQYFLLFQLQQSLDIHIKEITEKWKETQQQLSTKWVEFEKVLSDYGFSSSIEQELIDLLMCGVPSPPTNQFIVNNINIKKLKLTESNCNSIREILIKYILPSFLNIFHIITVLHNNSLENDGYKGLLDTNTVKNILDYCGSFGMRLQSLETLICGIESHYTSFFSWLYKVQCTLNEIQPDRKLSLPFNELSIMSLLKKGLKFDLLFSTSTLFSSSSSSSPSSPPSNNNSPTFSSSSSINNNNNNNNNELNQSGNIGFSNNNENLEFQYKDLKGNFHDLFKDFSSKIFETFNEITIVLPSLFKFENVIPFCLYDKNDTSVSHKFNCSLISHPNDTIYLSIYTTLSNSNRLFICKREDKLNWSFTCYQLNEKYSILDCKFYNNSSLMALVSEDIIKANQKKSTRKNTYLKQYQYKTDDNDDSDNREYIKLDVNIPQSTILLDLLDSFKSREIILKSRISPITFELSTSRKISATFIGKRRVALYDLAEDEEEEEEGEEEDICLVR</sequence>
<accession>Q54NI1</accession>
<name>APC4_DICDI</name>
<organism>
    <name type="scientific">Dictyostelium discoideum</name>
    <name type="common">Social amoeba</name>
    <dbReference type="NCBI Taxonomy" id="44689"/>
    <lineage>
        <taxon>Eukaryota</taxon>
        <taxon>Amoebozoa</taxon>
        <taxon>Evosea</taxon>
        <taxon>Eumycetozoa</taxon>
        <taxon>Dictyostelia</taxon>
        <taxon>Dictyosteliales</taxon>
        <taxon>Dictyosteliaceae</taxon>
        <taxon>Dictyostelium</taxon>
    </lineage>
</organism>
<keyword id="KW-0131">Cell cycle</keyword>
<keyword id="KW-0132">Cell division</keyword>
<keyword id="KW-0498">Mitosis</keyword>
<keyword id="KW-0539">Nucleus</keyword>
<keyword id="KW-1185">Reference proteome</keyword>
<keyword id="KW-0833">Ubl conjugation pathway</keyword>
<comment type="function">
    <text evidence="1">Component of the anaphase promoting complex/cyclosome (APC/C), a cell cycle-regulated E3 ubiquitin-protein ligase complex that controls progression through mitosis and the G1 phase of the cell cycle.</text>
</comment>
<comment type="pathway">
    <text>Protein modification; protein ubiquitination.</text>
</comment>
<comment type="subunit">
    <text evidence="1">The APC/C is composed of at least 13 subunits that stay tightly associated throughout the cell cycle: anapc1, anapc2, anapc3, anapc4, anapc5, anapc6, anapc7, anapc8, anapc10, anapc11, cdc20, cdc26 and cdh1.</text>
</comment>
<comment type="subcellular location">
    <subcellularLocation>
        <location evidence="1">Nucleus</location>
    </subcellularLocation>
</comment>
<comment type="similarity">
    <text evidence="3">Belongs to the APC4 family.</text>
</comment>
<protein>
    <recommendedName>
        <fullName>Anaphase-promoting complex subunit 4</fullName>
        <shortName>APC4</shortName>
    </recommendedName>
</protein>
<evidence type="ECO:0000250" key="1"/>
<evidence type="ECO:0000256" key="2">
    <source>
        <dbReference type="SAM" id="MobiDB-lite"/>
    </source>
</evidence>
<evidence type="ECO:0000305" key="3"/>
<gene>
    <name type="primary">anapc4</name>
    <name type="synonym">apc4</name>
    <name type="ORF">DDB_G0285223</name>
</gene>
<feature type="chain" id="PRO_0000328279" description="Anaphase-promoting complex subunit 4">
    <location>
        <begin position="1"/>
        <end position="837"/>
    </location>
</feature>
<feature type="region of interest" description="Disordered" evidence="2">
    <location>
        <begin position="59"/>
        <end position="89"/>
    </location>
</feature>
<feature type="region of interest" description="Disordered" evidence="2">
    <location>
        <begin position="547"/>
        <end position="588"/>
    </location>
</feature>
<feature type="compositionally biased region" description="Low complexity" evidence="2">
    <location>
        <begin position="59"/>
        <end position="81"/>
    </location>
</feature>
<feature type="compositionally biased region" description="Low complexity" evidence="2">
    <location>
        <begin position="547"/>
        <end position="581"/>
    </location>
</feature>
<dbReference type="EMBL" id="AAFI02000076">
    <property type="protein sequence ID" value="EAL64823.1"/>
    <property type="molecule type" value="Genomic_DNA"/>
</dbReference>
<dbReference type="RefSeq" id="XP_638336.1">
    <property type="nucleotide sequence ID" value="XM_633244.1"/>
</dbReference>
<dbReference type="SMR" id="Q54NI1"/>
<dbReference type="FunCoup" id="Q54NI1">
    <property type="interactions" value="197"/>
</dbReference>
<dbReference type="STRING" id="44689.Q54NI1"/>
<dbReference type="PaxDb" id="44689-DDB0234268"/>
<dbReference type="EnsemblProtists" id="EAL64823">
    <property type="protein sequence ID" value="EAL64823"/>
    <property type="gene ID" value="DDB_G0285223"/>
</dbReference>
<dbReference type="GeneID" id="8625004"/>
<dbReference type="KEGG" id="ddi:DDB_G0285223"/>
<dbReference type="dictyBase" id="DDB_G0285223">
    <property type="gene designation" value="anapc4"/>
</dbReference>
<dbReference type="VEuPathDB" id="AmoebaDB:DDB_G0285223"/>
<dbReference type="eggNOG" id="KOG4640">
    <property type="taxonomic scope" value="Eukaryota"/>
</dbReference>
<dbReference type="HOGENOM" id="CLU_339626_0_0_1"/>
<dbReference type="InParanoid" id="Q54NI1"/>
<dbReference type="OMA" id="SHKFNCS"/>
<dbReference type="PhylomeDB" id="Q54NI1"/>
<dbReference type="Reactome" id="R-DDI-141430">
    <property type="pathway name" value="Inactivation of APC/C via direct inhibition of the APC/C complex"/>
</dbReference>
<dbReference type="Reactome" id="R-DDI-174048">
    <property type="pathway name" value="APC/C:Cdc20 mediated degradation of Cyclin B"/>
</dbReference>
<dbReference type="Reactome" id="R-DDI-174084">
    <property type="pathway name" value="Autodegradation of Cdh1 by Cdh1:APC/C"/>
</dbReference>
<dbReference type="Reactome" id="R-DDI-174154">
    <property type="pathway name" value="APC/C:Cdc20 mediated degradation of Securin"/>
</dbReference>
<dbReference type="Reactome" id="R-DDI-174178">
    <property type="pathway name" value="APC/C:Cdh1 mediated degradation of Cdc20 and other APC/C:Cdh1 targeted proteins in late mitosis/early G1"/>
</dbReference>
<dbReference type="Reactome" id="R-DDI-174184">
    <property type="pathway name" value="Cdc20:Phospho-APC/C mediated degradation of Cyclin A"/>
</dbReference>
<dbReference type="Reactome" id="R-DDI-176407">
    <property type="pathway name" value="Conversion from APC/C:Cdc20 to APC/C:Cdh1 in late anaphase"/>
</dbReference>
<dbReference type="Reactome" id="R-DDI-176408">
    <property type="pathway name" value="Regulation of APC/C activators between G1/S and early anaphase"/>
</dbReference>
<dbReference type="Reactome" id="R-DDI-176409">
    <property type="pathway name" value="APC/C:Cdc20 mediated degradation of mitotic proteins"/>
</dbReference>
<dbReference type="Reactome" id="R-DDI-176412">
    <property type="pathway name" value="Phosphorylation of the APC/C"/>
</dbReference>
<dbReference type="Reactome" id="R-DDI-179409">
    <property type="pathway name" value="APC-Cdc20 mediated degradation of Nek2A"/>
</dbReference>
<dbReference type="Reactome" id="R-DDI-2467813">
    <property type="pathway name" value="Separation of Sister Chromatids"/>
</dbReference>
<dbReference type="Reactome" id="R-DDI-2559582">
    <property type="pathway name" value="Senescence-Associated Secretory Phenotype (SASP)"/>
</dbReference>
<dbReference type="Reactome" id="R-DDI-69017">
    <property type="pathway name" value="CDK-mediated phosphorylation and removal of Cdc6"/>
</dbReference>
<dbReference type="Reactome" id="R-DDI-983168">
    <property type="pathway name" value="Antigen processing: Ubiquitination &amp; Proteasome degradation"/>
</dbReference>
<dbReference type="UniPathway" id="UPA00143"/>
<dbReference type="PRO" id="PR:Q54NI1"/>
<dbReference type="Proteomes" id="UP000002195">
    <property type="component" value="Chromosome 4"/>
</dbReference>
<dbReference type="GO" id="GO:0005680">
    <property type="term" value="C:anaphase-promoting complex"/>
    <property type="evidence" value="ECO:0000318"/>
    <property type="project" value="GO_Central"/>
</dbReference>
<dbReference type="GO" id="GO:0034399">
    <property type="term" value="C:nuclear periphery"/>
    <property type="evidence" value="ECO:0000318"/>
    <property type="project" value="GO_Central"/>
</dbReference>
<dbReference type="GO" id="GO:0031145">
    <property type="term" value="P:anaphase-promoting complex-dependent catabolic process"/>
    <property type="evidence" value="ECO:0000318"/>
    <property type="project" value="GO_Central"/>
</dbReference>
<dbReference type="GO" id="GO:0051301">
    <property type="term" value="P:cell division"/>
    <property type="evidence" value="ECO:0007669"/>
    <property type="project" value="UniProtKB-KW"/>
</dbReference>
<dbReference type="GO" id="GO:0070979">
    <property type="term" value="P:protein K11-linked ubiquitination"/>
    <property type="evidence" value="ECO:0000318"/>
    <property type="project" value="GO_Central"/>
</dbReference>
<dbReference type="Gene3D" id="2.130.10.10">
    <property type="entry name" value="YVTN repeat-like/Quinoprotein amine dehydrogenase"/>
    <property type="match status" value="1"/>
</dbReference>
<dbReference type="InterPro" id="IPR024789">
    <property type="entry name" value="APC4"/>
</dbReference>
<dbReference type="InterPro" id="IPR024977">
    <property type="entry name" value="Apc4-like_WD40_dom"/>
</dbReference>
<dbReference type="InterPro" id="IPR024790">
    <property type="entry name" value="APC4_long_dom"/>
</dbReference>
<dbReference type="InterPro" id="IPR015943">
    <property type="entry name" value="WD40/YVTN_repeat-like_dom_sf"/>
</dbReference>
<dbReference type="InterPro" id="IPR036322">
    <property type="entry name" value="WD40_repeat_dom_sf"/>
</dbReference>
<dbReference type="InterPro" id="IPR001680">
    <property type="entry name" value="WD40_rpt"/>
</dbReference>
<dbReference type="PANTHER" id="PTHR13260">
    <property type="entry name" value="ANAPHASE PROMOTING COMPLEX SUBUNIT 4 APC4"/>
    <property type="match status" value="1"/>
</dbReference>
<dbReference type="PANTHER" id="PTHR13260:SF0">
    <property type="entry name" value="ANAPHASE-PROMOTING COMPLEX SUBUNIT 4"/>
    <property type="match status" value="1"/>
</dbReference>
<dbReference type="Pfam" id="PF12896">
    <property type="entry name" value="ANAPC4"/>
    <property type="match status" value="1"/>
</dbReference>
<dbReference type="Pfam" id="PF12894">
    <property type="entry name" value="ANAPC4_WD40"/>
    <property type="match status" value="1"/>
</dbReference>
<dbReference type="SUPFAM" id="SSF81995">
    <property type="entry name" value="beta-sandwich domain of Sec23/24"/>
    <property type="match status" value="1"/>
</dbReference>
<dbReference type="SUPFAM" id="SSF50978">
    <property type="entry name" value="WD40 repeat-like"/>
    <property type="match status" value="1"/>
</dbReference>
<proteinExistence type="inferred from homology"/>
<reference key="1">
    <citation type="journal article" date="2005" name="Nature">
        <title>The genome of the social amoeba Dictyostelium discoideum.</title>
        <authorList>
            <person name="Eichinger L."/>
            <person name="Pachebat J.A."/>
            <person name="Gloeckner G."/>
            <person name="Rajandream M.A."/>
            <person name="Sucgang R."/>
            <person name="Berriman M."/>
            <person name="Song J."/>
            <person name="Olsen R."/>
            <person name="Szafranski K."/>
            <person name="Xu Q."/>
            <person name="Tunggal B."/>
            <person name="Kummerfeld S."/>
            <person name="Madera M."/>
            <person name="Konfortov B.A."/>
            <person name="Rivero F."/>
            <person name="Bankier A.T."/>
            <person name="Lehmann R."/>
            <person name="Hamlin N."/>
            <person name="Davies R."/>
            <person name="Gaudet P."/>
            <person name="Fey P."/>
            <person name="Pilcher K."/>
            <person name="Chen G."/>
            <person name="Saunders D."/>
            <person name="Sodergren E.J."/>
            <person name="Davis P."/>
            <person name="Kerhornou A."/>
            <person name="Nie X."/>
            <person name="Hall N."/>
            <person name="Anjard C."/>
            <person name="Hemphill L."/>
            <person name="Bason N."/>
            <person name="Farbrother P."/>
            <person name="Desany B."/>
            <person name="Just E."/>
            <person name="Morio T."/>
            <person name="Rost R."/>
            <person name="Churcher C.M."/>
            <person name="Cooper J."/>
            <person name="Haydock S."/>
            <person name="van Driessche N."/>
            <person name="Cronin A."/>
            <person name="Goodhead I."/>
            <person name="Muzny D.M."/>
            <person name="Mourier T."/>
            <person name="Pain A."/>
            <person name="Lu M."/>
            <person name="Harper D."/>
            <person name="Lindsay R."/>
            <person name="Hauser H."/>
            <person name="James K.D."/>
            <person name="Quiles M."/>
            <person name="Madan Babu M."/>
            <person name="Saito T."/>
            <person name="Buchrieser C."/>
            <person name="Wardroper A."/>
            <person name="Felder M."/>
            <person name="Thangavelu M."/>
            <person name="Johnson D."/>
            <person name="Knights A."/>
            <person name="Loulseged H."/>
            <person name="Mungall K.L."/>
            <person name="Oliver K."/>
            <person name="Price C."/>
            <person name="Quail M.A."/>
            <person name="Urushihara H."/>
            <person name="Hernandez J."/>
            <person name="Rabbinowitsch E."/>
            <person name="Steffen D."/>
            <person name="Sanders M."/>
            <person name="Ma J."/>
            <person name="Kohara Y."/>
            <person name="Sharp S."/>
            <person name="Simmonds M.N."/>
            <person name="Spiegler S."/>
            <person name="Tivey A."/>
            <person name="Sugano S."/>
            <person name="White B."/>
            <person name="Walker D."/>
            <person name="Woodward J.R."/>
            <person name="Winckler T."/>
            <person name="Tanaka Y."/>
            <person name="Shaulsky G."/>
            <person name="Schleicher M."/>
            <person name="Weinstock G.M."/>
            <person name="Rosenthal A."/>
            <person name="Cox E.C."/>
            <person name="Chisholm R.L."/>
            <person name="Gibbs R.A."/>
            <person name="Loomis W.F."/>
            <person name="Platzer M."/>
            <person name="Kay R.R."/>
            <person name="Williams J.G."/>
            <person name="Dear P.H."/>
            <person name="Noegel A.A."/>
            <person name="Barrell B.G."/>
            <person name="Kuspa A."/>
        </authorList>
    </citation>
    <scope>NUCLEOTIDE SEQUENCE [LARGE SCALE GENOMIC DNA]</scope>
    <source>
        <strain>AX4</strain>
    </source>
</reference>